<proteinExistence type="inferred from homology"/>
<evidence type="ECO:0000255" key="1">
    <source>
        <dbReference type="HAMAP-Rule" id="MF_00102"/>
    </source>
</evidence>
<evidence type="ECO:0000305" key="2"/>
<organism>
    <name type="scientific">Sulfurimonas denitrificans (strain ATCC 33889 / DSM 1251)</name>
    <name type="common">Thiomicrospira denitrificans (strain ATCC 33889 / DSM 1251)</name>
    <dbReference type="NCBI Taxonomy" id="326298"/>
    <lineage>
        <taxon>Bacteria</taxon>
        <taxon>Pseudomonadati</taxon>
        <taxon>Campylobacterota</taxon>
        <taxon>Epsilonproteobacteria</taxon>
        <taxon>Campylobacterales</taxon>
        <taxon>Sulfurimonadaceae</taxon>
        <taxon>Sulfurimonas</taxon>
    </lineage>
</organism>
<reference key="1">
    <citation type="journal article" date="2008" name="Appl. Environ. Microbiol.">
        <title>Genome of the epsilonproteobacterial chemolithoautotroph Sulfurimonas denitrificans.</title>
        <authorList>
            <person name="Sievert S.M."/>
            <person name="Scott K.M."/>
            <person name="Klotz M.G."/>
            <person name="Chain P.S.G."/>
            <person name="Hauser L.J."/>
            <person name="Hemp J."/>
            <person name="Huegler M."/>
            <person name="Land M."/>
            <person name="Lapidus A."/>
            <person name="Larimer F.W."/>
            <person name="Lucas S."/>
            <person name="Malfatti S.A."/>
            <person name="Meyer F."/>
            <person name="Paulsen I.T."/>
            <person name="Ren Q."/>
            <person name="Simon J."/>
            <person name="Bailey K."/>
            <person name="Diaz E."/>
            <person name="Fitzpatrick K.A."/>
            <person name="Glover B."/>
            <person name="Gwatney N."/>
            <person name="Korajkic A."/>
            <person name="Long A."/>
            <person name="Mobberley J.M."/>
            <person name="Pantry S.N."/>
            <person name="Pazder G."/>
            <person name="Peterson S."/>
            <person name="Quintanilla J.D."/>
            <person name="Sprinkle R."/>
            <person name="Stephens J."/>
            <person name="Thomas P."/>
            <person name="Vaughn R."/>
            <person name="Weber M.J."/>
            <person name="Wooten L.L."/>
        </authorList>
    </citation>
    <scope>NUCLEOTIDE SEQUENCE [LARGE SCALE GENOMIC DNA]</scope>
    <source>
        <strain>ATCC 33889 / DSM 1251</strain>
    </source>
</reference>
<protein>
    <recommendedName>
        <fullName evidence="1">4-hydroxy-tetrahydrodipicolinate reductase</fullName>
        <shortName evidence="1">HTPA reductase</shortName>
        <ecNumber evidence="1">1.17.1.8</ecNumber>
    </recommendedName>
</protein>
<sequence length="255" mass="27345">MVKVGVFGANGRVGKLLIDDLKLSENISLSSVYVRNSLDFSIDPSVLVSTDMKSFLNACDIVIDFSLPEACEDLLEAAIKTPKPLVIGTTGLNAHQLNLLKQASENMPILYATNMSLGVALLNKLVHQASAALKGFDIEIVEMHHKHKKDAPSGTALTLAHSAASGRGLDLNKVRVSGRDGNIGERNSDEIAVMALRGGDIVGRHTVGFYNDGEFIELNHTATSRNTFSKGAIRAASWLAKKEAGLYSISDCLEI</sequence>
<comment type="function">
    <text evidence="1">Catalyzes the conversion of 4-hydroxy-tetrahydrodipicolinate (HTPA) to tetrahydrodipicolinate.</text>
</comment>
<comment type="catalytic activity">
    <reaction evidence="1">
        <text>(S)-2,3,4,5-tetrahydrodipicolinate + NAD(+) + H2O = (2S,4S)-4-hydroxy-2,3,4,5-tetrahydrodipicolinate + NADH + H(+)</text>
        <dbReference type="Rhea" id="RHEA:35323"/>
        <dbReference type="ChEBI" id="CHEBI:15377"/>
        <dbReference type="ChEBI" id="CHEBI:15378"/>
        <dbReference type="ChEBI" id="CHEBI:16845"/>
        <dbReference type="ChEBI" id="CHEBI:57540"/>
        <dbReference type="ChEBI" id="CHEBI:57945"/>
        <dbReference type="ChEBI" id="CHEBI:67139"/>
        <dbReference type="EC" id="1.17.1.8"/>
    </reaction>
</comment>
<comment type="catalytic activity">
    <reaction evidence="1">
        <text>(S)-2,3,4,5-tetrahydrodipicolinate + NADP(+) + H2O = (2S,4S)-4-hydroxy-2,3,4,5-tetrahydrodipicolinate + NADPH + H(+)</text>
        <dbReference type="Rhea" id="RHEA:35331"/>
        <dbReference type="ChEBI" id="CHEBI:15377"/>
        <dbReference type="ChEBI" id="CHEBI:15378"/>
        <dbReference type="ChEBI" id="CHEBI:16845"/>
        <dbReference type="ChEBI" id="CHEBI:57783"/>
        <dbReference type="ChEBI" id="CHEBI:58349"/>
        <dbReference type="ChEBI" id="CHEBI:67139"/>
        <dbReference type="EC" id="1.17.1.8"/>
    </reaction>
</comment>
<comment type="pathway">
    <text evidence="1">Amino-acid biosynthesis; L-lysine biosynthesis via DAP pathway; (S)-tetrahydrodipicolinate from L-aspartate: step 4/4.</text>
</comment>
<comment type="subcellular location">
    <subcellularLocation>
        <location evidence="1">Cytoplasm</location>
    </subcellularLocation>
</comment>
<comment type="similarity">
    <text evidence="1">Belongs to the DapB family.</text>
</comment>
<comment type="caution">
    <text evidence="2">Was originally thought to be a dihydrodipicolinate reductase (DHDPR), catalyzing the conversion of dihydrodipicolinate to tetrahydrodipicolinate. However, it was shown in E.coli that the substrate of the enzymatic reaction is not dihydrodipicolinate (DHDP) but in fact (2S,4S)-4-hydroxy-2,3,4,5-tetrahydrodipicolinic acid (HTPA), the product released by the DapA-catalyzed reaction.</text>
</comment>
<name>DAPB_SULDN</name>
<feature type="chain" id="PRO_1000008660" description="4-hydroxy-tetrahydrodipicolinate reductase">
    <location>
        <begin position="1"/>
        <end position="255"/>
    </location>
</feature>
<feature type="active site" description="Proton donor/acceptor" evidence="1">
    <location>
        <position position="144"/>
    </location>
</feature>
<feature type="active site" description="Proton donor" evidence="1">
    <location>
        <position position="148"/>
    </location>
</feature>
<feature type="binding site" evidence="1">
    <location>
        <begin position="8"/>
        <end position="13"/>
    </location>
    <ligand>
        <name>NAD(+)</name>
        <dbReference type="ChEBI" id="CHEBI:57540"/>
    </ligand>
</feature>
<feature type="binding site" evidence="1">
    <location>
        <begin position="88"/>
        <end position="90"/>
    </location>
    <ligand>
        <name>NAD(+)</name>
        <dbReference type="ChEBI" id="CHEBI:57540"/>
    </ligand>
</feature>
<feature type="binding site" evidence="1">
    <location>
        <begin position="112"/>
        <end position="115"/>
    </location>
    <ligand>
        <name>NAD(+)</name>
        <dbReference type="ChEBI" id="CHEBI:57540"/>
    </ligand>
</feature>
<feature type="binding site" evidence="1">
    <location>
        <position position="145"/>
    </location>
    <ligand>
        <name>(S)-2,3,4,5-tetrahydrodipicolinate</name>
        <dbReference type="ChEBI" id="CHEBI:16845"/>
    </ligand>
</feature>
<feature type="binding site" evidence="1">
    <location>
        <begin position="154"/>
        <end position="155"/>
    </location>
    <ligand>
        <name>(S)-2,3,4,5-tetrahydrodipicolinate</name>
        <dbReference type="ChEBI" id="CHEBI:16845"/>
    </ligand>
</feature>
<gene>
    <name evidence="1" type="primary">dapB</name>
    <name type="ordered locus">Suden_1870</name>
</gene>
<dbReference type="EC" id="1.17.1.8" evidence="1"/>
<dbReference type="EMBL" id="CP000153">
    <property type="protein sequence ID" value="ABB45144.1"/>
    <property type="molecule type" value="Genomic_DNA"/>
</dbReference>
<dbReference type="RefSeq" id="WP_011373484.1">
    <property type="nucleotide sequence ID" value="NC_007575.1"/>
</dbReference>
<dbReference type="SMR" id="Q30PD7"/>
<dbReference type="STRING" id="326298.Suden_1870"/>
<dbReference type="KEGG" id="tdn:Suden_1870"/>
<dbReference type="eggNOG" id="COG0289">
    <property type="taxonomic scope" value="Bacteria"/>
</dbReference>
<dbReference type="HOGENOM" id="CLU_047479_2_2_7"/>
<dbReference type="OrthoDB" id="9790352at2"/>
<dbReference type="UniPathway" id="UPA00034">
    <property type="reaction ID" value="UER00018"/>
</dbReference>
<dbReference type="Proteomes" id="UP000002714">
    <property type="component" value="Chromosome"/>
</dbReference>
<dbReference type="GO" id="GO:0005829">
    <property type="term" value="C:cytosol"/>
    <property type="evidence" value="ECO:0007669"/>
    <property type="project" value="TreeGrafter"/>
</dbReference>
<dbReference type="GO" id="GO:0008839">
    <property type="term" value="F:4-hydroxy-tetrahydrodipicolinate reductase"/>
    <property type="evidence" value="ECO:0007669"/>
    <property type="project" value="UniProtKB-EC"/>
</dbReference>
<dbReference type="GO" id="GO:0051287">
    <property type="term" value="F:NAD binding"/>
    <property type="evidence" value="ECO:0007669"/>
    <property type="project" value="UniProtKB-UniRule"/>
</dbReference>
<dbReference type="GO" id="GO:0050661">
    <property type="term" value="F:NADP binding"/>
    <property type="evidence" value="ECO:0007669"/>
    <property type="project" value="UniProtKB-UniRule"/>
</dbReference>
<dbReference type="GO" id="GO:0016726">
    <property type="term" value="F:oxidoreductase activity, acting on CH or CH2 groups, NAD or NADP as acceptor"/>
    <property type="evidence" value="ECO:0007669"/>
    <property type="project" value="UniProtKB-UniRule"/>
</dbReference>
<dbReference type="GO" id="GO:0019877">
    <property type="term" value="P:diaminopimelate biosynthetic process"/>
    <property type="evidence" value="ECO:0007669"/>
    <property type="project" value="UniProtKB-UniRule"/>
</dbReference>
<dbReference type="GO" id="GO:0009089">
    <property type="term" value="P:lysine biosynthetic process via diaminopimelate"/>
    <property type="evidence" value="ECO:0007669"/>
    <property type="project" value="UniProtKB-UniRule"/>
</dbReference>
<dbReference type="CDD" id="cd02274">
    <property type="entry name" value="DHDPR_N"/>
    <property type="match status" value="1"/>
</dbReference>
<dbReference type="FunFam" id="3.30.360.10:FF:000004">
    <property type="entry name" value="4-hydroxy-tetrahydrodipicolinate reductase"/>
    <property type="match status" value="1"/>
</dbReference>
<dbReference type="Gene3D" id="3.30.360.10">
    <property type="entry name" value="Dihydrodipicolinate Reductase, domain 2"/>
    <property type="match status" value="1"/>
</dbReference>
<dbReference type="Gene3D" id="3.40.50.720">
    <property type="entry name" value="NAD(P)-binding Rossmann-like Domain"/>
    <property type="match status" value="1"/>
</dbReference>
<dbReference type="HAMAP" id="MF_00102">
    <property type="entry name" value="DapB"/>
    <property type="match status" value="1"/>
</dbReference>
<dbReference type="InterPro" id="IPR022663">
    <property type="entry name" value="DapB_C"/>
</dbReference>
<dbReference type="InterPro" id="IPR000846">
    <property type="entry name" value="DapB_N"/>
</dbReference>
<dbReference type="InterPro" id="IPR022664">
    <property type="entry name" value="DapB_N_CS"/>
</dbReference>
<dbReference type="InterPro" id="IPR023940">
    <property type="entry name" value="DHDPR_bac"/>
</dbReference>
<dbReference type="InterPro" id="IPR036291">
    <property type="entry name" value="NAD(P)-bd_dom_sf"/>
</dbReference>
<dbReference type="NCBIfam" id="TIGR00036">
    <property type="entry name" value="dapB"/>
    <property type="match status" value="1"/>
</dbReference>
<dbReference type="PANTHER" id="PTHR20836:SF0">
    <property type="entry name" value="4-HYDROXY-TETRAHYDRODIPICOLINATE REDUCTASE 1, CHLOROPLASTIC-RELATED"/>
    <property type="match status" value="1"/>
</dbReference>
<dbReference type="PANTHER" id="PTHR20836">
    <property type="entry name" value="DIHYDRODIPICOLINATE REDUCTASE"/>
    <property type="match status" value="1"/>
</dbReference>
<dbReference type="Pfam" id="PF05173">
    <property type="entry name" value="DapB_C"/>
    <property type="match status" value="1"/>
</dbReference>
<dbReference type="Pfam" id="PF01113">
    <property type="entry name" value="DapB_N"/>
    <property type="match status" value="1"/>
</dbReference>
<dbReference type="PIRSF" id="PIRSF000161">
    <property type="entry name" value="DHPR"/>
    <property type="match status" value="1"/>
</dbReference>
<dbReference type="SUPFAM" id="SSF55347">
    <property type="entry name" value="Glyceraldehyde-3-phosphate dehydrogenase-like, C-terminal domain"/>
    <property type="match status" value="1"/>
</dbReference>
<dbReference type="SUPFAM" id="SSF51735">
    <property type="entry name" value="NAD(P)-binding Rossmann-fold domains"/>
    <property type="match status" value="1"/>
</dbReference>
<dbReference type="PROSITE" id="PS01298">
    <property type="entry name" value="DAPB"/>
    <property type="match status" value="1"/>
</dbReference>
<accession>Q30PD7</accession>
<keyword id="KW-0028">Amino-acid biosynthesis</keyword>
<keyword id="KW-0963">Cytoplasm</keyword>
<keyword id="KW-0220">Diaminopimelate biosynthesis</keyword>
<keyword id="KW-0457">Lysine biosynthesis</keyword>
<keyword id="KW-0520">NAD</keyword>
<keyword id="KW-0521">NADP</keyword>
<keyword id="KW-0560">Oxidoreductase</keyword>
<keyword id="KW-1185">Reference proteome</keyword>